<keyword id="KW-0963">Cytoplasm</keyword>
<keyword id="KW-0369">Histidine metabolism</keyword>
<keyword id="KW-0378">Hydrolase</keyword>
<keyword id="KW-0408">Iron</keyword>
<keyword id="KW-0479">Metal-binding</keyword>
<keyword id="KW-0862">Zinc</keyword>
<feature type="chain" id="PRO_0000306523" description="Imidazolonepropionase">
    <location>
        <begin position="1"/>
        <end position="421"/>
    </location>
</feature>
<feature type="binding site" evidence="1">
    <location>
        <position position="81"/>
    </location>
    <ligand>
        <name>Fe(3+)</name>
        <dbReference type="ChEBI" id="CHEBI:29034"/>
    </ligand>
</feature>
<feature type="binding site" evidence="1">
    <location>
        <position position="81"/>
    </location>
    <ligand>
        <name>Zn(2+)</name>
        <dbReference type="ChEBI" id="CHEBI:29105"/>
    </ligand>
</feature>
<feature type="binding site" evidence="1">
    <location>
        <position position="83"/>
    </location>
    <ligand>
        <name>Fe(3+)</name>
        <dbReference type="ChEBI" id="CHEBI:29034"/>
    </ligand>
</feature>
<feature type="binding site" evidence="1">
    <location>
        <position position="83"/>
    </location>
    <ligand>
        <name>Zn(2+)</name>
        <dbReference type="ChEBI" id="CHEBI:29105"/>
    </ligand>
</feature>
<feature type="binding site" evidence="1">
    <location>
        <position position="90"/>
    </location>
    <ligand>
        <name>4-imidazolone-5-propanoate</name>
        <dbReference type="ChEBI" id="CHEBI:77893"/>
    </ligand>
</feature>
<feature type="binding site" evidence="1">
    <location>
        <position position="153"/>
    </location>
    <ligand>
        <name>4-imidazolone-5-propanoate</name>
        <dbReference type="ChEBI" id="CHEBI:77893"/>
    </ligand>
</feature>
<feature type="binding site" evidence="1">
    <location>
        <position position="153"/>
    </location>
    <ligand>
        <name>N-formimidoyl-L-glutamate</name>
        <dbReference type="ChEBI" id="CHEBI:58928"/>
    </ligand>
</feature>
<feature type="binding site" evidence="1">
    <location>
        <position position="186"/>
    </location>
    <ligand>
        <name>4-imidazolone-5-propanoate</name>
        <dbReference type="ChEBI" id="CHEBI:77893"/>
    </ligand>
</feature>
<feature type="binding site" evidence="1">
    <location>
        <position position="251"/>
    </location>
    <ligand>
        <name>Fe(3+)</name>
        <dbReference type="ChEBI" id="CHEBI:29034"/>
    </ligand>
</feature>
<feature type="binding site" evidence="1">
    <location>
        <position position="251"/>
    </location>
    <ligand>
        <name>Zn(2+)</name>
        <dbReference type="ChEBI" id="CHEBI:29105"/>
    </ligand>
</feature>
<feature type="binding site" evidence="1">
    <location>
        <position position="254"/>
    </location>
    <ligand>
        <name>4-imidazolone-5-propanoate</name>
        <dbReference type="ChEBI" id="CHEBI:77893"/>
    </ligand>
</feature>
<feature type="binding site" evidence="1">
    <location>
        <position position="326"/>
    </location>
    <ligand>
        <name>Fe(3+)</name>
        <dbReference type="ChEBI" id="CHEBI:29034"/>
    </ligand>
</feature>
<feature type="binding site" evidence="1">
    <location>
        <position position="326"/>
    </location>
    <ligand>
        <name>Zn(2+)</name>
        <dbReference type="ChEBI" id="CHEBI:29105"/>
    </ligand>
</feature>
<feature type="binding site" evidence="1">
    <location>
        <position position="328"/>
    </location>
    <ligand>
        <name>N-formimidoyl-L-glutamate</name>
        <dbReference type="ChEBI" id="CHEBI:58928"/>
    </ligand>
</feature>
<feature type="binding site" evidence="1">
    <location>
        <position position="330"/>
    </location>
    <ligand>
        <name>N-formimidoyl-L-glutamate</name>
        <dbReference type="ChEBI" id="CHEBI:58928"/>
    </ligand>
</feature>
<feature type="binding site" evidence="1">
    <location>
        <position position="331"/>
    </location>
    <ligand>
        <name>4-imidazolone-5-propanoate</name>
        <dbReference type="ChEBI" id="CHEBI:77893"/>
    </ligand>
</feature>
<organism>
    <name type="scientific">Streptococcus pyogenes serotype M12 (strain MGAS9429)</name>
    <dbReference type="NCBI Taxonomy" id="370551"/>
    <lineage>
        <taxon>Bacteria</taxon>
        <taxon>Bacillati</taxon>
        <taxon>Bacillota</taxon>
        <taxon>Bacilli</taxon>
        <taxon>Lactobacillales</taxon>
        <taxon>Streptococcaceae</taxon>
        <taxon>Streptococcus</taxon>
    </lineage>
</organism>
<reference key="1">
    <citation type="journal article" date="2006" name="Proc. Natl. Acad. Sci. U.S.A.">
        <title>Molecular genetic anatomy of inter- and intraserotype variation in the human bacterial pathogen group A Streptococcus.</title>
        <authorList>
            <person name="Beres S.B."/>
            <person name="Richter E.W."/>
            <person name="Nagiec M.J."/>
            <person name="Sumby P."/>
            <person name="Porcella S.F."/>
            <person name="DeLeo F.R."/>
            <person name="Musser J.M."/>
        </authorList>
    </citation>
    <scope>NUCLEOTIDE SEQUENCE [LARGE SCALE GENOMIC DNA]</scope>
    <source>
        <strain>MGAS9429</strain>
    </source>
</reference>
<proteinExistence type="inferred from homology"/>
<comment type="function">
    <text evidence="1">Catalyzes the hydrolytic cleavage of the carbon-nitrogen bond in imidazolone-5-propanoate to yield N-formimidoyl-L-glutamate. It is the third step in the universal histidine degradation pathway.</text>
</comment>
<comment type="catalytic activity">
    <reaction evidence="1">
        <text>4-imidazolone-5-propanoate + H2O = N-formimidoyl-L-glutamate</text>
        <dbReference type="Rhea" id="RHEA:23660"/>
        <dbReference type="ChEBI" id="CHEBI:15377"/>
        <dbReference type="ChEBI" id="CHEBI:58928"/>
        <dbReference type="ChEBI" id="CHEBI:77893"/>
        <dbReference type="EC" id="3.5.2.7"/>
    </reaction>
</comment>
<comment type="cofactor">
    <cofactor evidence="1">
        <name>Zn(2+)</name>
        <dbReference type="ChEBI" id="CHEBI:29105"/>
    </cofactor>
    <cofactor evidence="1">
        <name>Fe(3+)</name>
        <dbReference type="ChEBI" id="CHEBI:29034"/>
    </cofactor>
    <text evidence="1">Binds 1 zinc or iron ion per subunit.</text>
</comment>
<comment type="pathway">
    <text evidence="1">Amino-acid degradation; L-histidine degradation into L-glutamate; N-formimidoyl-L-glutamate from L-histidine: step 3/3.</text>
</comment>
<comment type="subcellular location">
    <subcellularLocation>
        <location evidence="1">Cytoplasm</location>
    </subcellularLocation>
</comment>
<comment type="similarity">
    <text evidence="1">Belongs to the metallo-dependent hydrolases superfamily. HutI family.</text>
</comment>
<comment type="sequence caution" evidence="2">
    <conflict type="erroneous initiation">
        <sequence resource="EMBL-CDS" id="ABF32967"/>
    </conflict>
</comment>
<name>HUTI_STRPC</name>
<dbReference type="EC" id="3.5.2.7" evidence="1"/>
<dbReference type="EMBL" id="CP000259">
    <property type="protein sequence ID" value="ABF32967.1"/>
    <property type="status" value="ALT_INIT"/>
    <property type="molecule type" value="Genomic_DNA"/>
</dbReference>
<dbReference type="RefSeq" id="WP_024623391.1">
    <property type="nucleotide sequence ID" value="NC_008021.1"/>
</dbReference>
<dbReference type="SMR" id="Q1JJK6"/>
<dbReference type="KEGG" id="spk:MGAS9429_Spy1780"/>
<dbReference type="HOGENOM" id="CLU_041647_0_1_9"/>
<dbReference type="UniPathway" id="UPA00379">
    <property type="reaction ID" value="UER00551"/>
</dbReference>
<dbReference type="Proteomes" id="UP000002433">
    <property type="component" value="Chromosome"/>
</dbReference>
<dbReference type="GO" id="GO:0005737">
    <property type="term" value="C:cytoplasm"/>
    <property type="evidence" value="ECO:0007669"/>
    <property type="project" value="UniProtKB-SubCell"/>
</dbReference>
<dbReference type="GO" id="GO:0050480">
    <property type="term" value="F:imidazolonepropionase activity"/>
    <property type="evidence" value="ECO:0007669"/>
    <property type="project" value="UniProtKB-UniRule"/>
</dbReference>
<dbReference type="GO" id="GO:0005506">
    <property type="term" value="F:iron ion binding"/>
    <property type="evidence" value="ECO:0007669"/>
    <property type="project" value="UniProtKB-UniRule"/>
</dbReference>
<dbReference type="GO" id="GO:0008270">
    <property type="term" value="F:zinc ion binding"/>
    <property type="evidence" value="ECO:0007669"/>
    <property type="project" value="UniProtKB-UniRule"/>
</dbReference>
<dbReference type="GO" id="GO:0019556">
    <property type="term" value="P:L-histidine catabolic process to glutamate and formamide"/>
    <property type="evidence" value="ECO:0007669"/>
    <property type="project" value="UniProtKB-UniPathway"/>
</dbReference>
<dbReference type="GO" id="GO:0019557">
    <property type="term" value="P:L-histidine catabolic process to glutamate and formate"/>
    <property type="evidence" value="ECO:0007669"/>
    <property type="project" value="UniProtKB-UniPathway"/>
</dbReference>
<dbReference type="CDD" id="cd01296">
    <property type="entry name" value="Imidazolone-5PH"/>
    <property type="match status" value="1"/>
</dbReference>
<dbReference type="FunFam" id="3.20.20.140:FF:000007">
    <property type="entry name" value="Imidazolonepropionase"/>
    <property type="match status" value="1"/>
</dbReference>
<dbReference type="Gene3D" id="3.20.20.140">
    <property type="entry name" value="Metal-dependent hydrolases"/>
    <property type="match status" value="1"/>
</dbReference>
<dbReference type="Gene3D" id="2.30.40.10">
    <property type="entry name" value="Urease, subunit C, domain 1"/>
    <property type="match status" value="1"/>
</dbReference>
<dbReference type="HAMAP" id="MF_00372">
    <property type="entry name" value="HutI"/>
    <property type="match status" value="1"/>
</dbReference>
<dbReference type="InterPro" id="IPR006680">
    <property type="entry name" value="Amidohydro-rel"/>
</dbReference>
<dbReference type="InterPro" id="IPR005920">
    <property type="entry name" value="HutI"/>
</dbReference>
<dbReference type="InterPro" id="IPR011059">
    <property type="entry name" value="Metal-dep_hydrolase_composite"/>
</dbReference>
<dbReference type="InterPro" id="IPR032466">
    <property type="entry name" value="Metal_Hydrolase"/>
</dbReference>
<dbReference type="NCBIfam" id="TIGR01224">
    <property type="entry name" value="hutI"/>
    <property type="match status" value="1"/>
</dbReference>
<dbReference type="PANTHER" id="PTHR42752">
    <property type="entry name" value="IMIDAZOLONEPROPIONASE"/>
    <property type="match status" value="1"/>
</dbReference>
<dbReference type="PANTHER" id="PTHR42752:SF1">
    <property type="entry name" value="IMIDAZOLONEPROPIONASE-RELATED"/>
    <property type="match status" value="1"/>
</dbReference>
<dbReference type="Pfam" id="PF01979">
    <property type="entry name" value="Amidohydro_1"/>
    <property type="match status" value="1"/>
</dbReference>
<dbReference type="SUPFAM" id="SSF51338">
    <property type="entry name" value="Composite domain of metallo-dependent hydrolases"/>
    <property type="match status" value="1"/>
</dbReference>
<dbReference type="SUPFAM" id="SSF51556">
    <property type="entry name" value="Metallo-dependent hydrolases"/>
    <property type="match status" value="1"/>
</dbReference>
<protein>
    <recommendedName>
        <fullName evidence="1">Imidazolonepropionase</fullName>
        <ecNumber evidence="1">3.5.2.7</ecNumber>
    </recommendedName>
    <alternativeName>
        <fullName evidence="1">Imidazolone-5-propionate hydrolase</fullName>
    </alternativeName>
</protein>
<sequence>MVADVLLTHFNQLFCLNDPGHPLTGQEMKKATIVEDGYIAIKDGLIVALGSGEPDAELVGPQTIMRSYKGKIATPGIIDCHTHLVYGGSREHEFAKKLAGVSYLDILAQGGGILSTVRATRSASFDNLYQKSKRLLDYMLLHGVTTVEAKSGYGLDWETEKRQLDVVAALEKDHPIDLVSTFMAAHAIPEEYKGNPKAYLDVIIKDMLPVVKEENLAEFCDIFCEKNVFTADESRYLLSKAKEMGFKLRIHADEIASIGGVDVAAELSAVSAEHLMMITNDDIAKLIGAGVIGNLLPATTFSLMEDTYAPARKMIDAGMAITLSTDSNPGSCPTANMQFVMQLGCFMLRLTPIEVLNAVTINAAYSVNRQERVGSLTVGKEADIAIFDAPNIDYPFYFFATNLIHQVYKKGQLTVDRGRIL</sequence>
<accession>Q1JJK6</accession>
<evidence type="ECO:0000255" key="1">
    <source>
        <dbReference type="HAMAP-Rule" id="MF_00372"/>
    </source>
</evidence>
<evidence type="ECO:0000305" key="2"/>
<gene>
    <name evidence="1" type="primary">hutI</name>
    <name type="ordered locus">MGAS9429_Spy1780</name>
</gene>